<organism>
    <name type="scientific">Buxus sempervirens</name>
    <name type="common">Common box</name>
    <name type="synonym">Buxus colchica</name>
    <dbReference type="NCBI Taxonomy" id="4002"/>
    <lineage>
        <taxon>Eukaryota</taxon>
        <taxon>Viridiplantae</taxon>
        <taxon>Streptophyta</taxon>
        <taxon>Embryophyta</taxon>
        <taxon>Tracheophyta</taxon>
        <taxon>Spermatophyta</taxon>
        <taxon>Magnoliopsida</taxon>
        <taxon>Buxales</taxon>
        <taxon>Buxaceae</taxon>
        <taxon>Buxus</taxon>
    </lineage>
</organism>
<geneLocation type="chloroplast"/>
<sequence>MSPQTETKASVGFKAGVKDYKLTYYTPEYETKDTDILAAFRVTPQPGVPPEEAGAAV</sequence>
<dbReference type="EC" id="4.1.1.39"/>
<dbReference type="EMBL" id="X69729">
    <property type="protein sequence ID" value="CAA49384.1"/>
    <property type="molecule type" value="Genomic_DNA"/>
</dbReference>
<dbReference type="PIR" id="S31542">
    <property type="entry name" value="S31542"/>
</dbReference>
<dbReference type="SMR" id="P31180"/>
<dbReference type="GO" id="GO:0009507">
    <property type="term" value="C:chloroplast"/>
    <property type="evidence" value="ECO:0007669"/>
    <property type="project" value="UniProtKB-SubCell"/>
</dbReference>
<dbReference type="GO" id="GO:0004497">
    <property type="term" value="F:monooxygenase activity"/>
    <property type="evidence" value="ECO:0007669"/>
    <property type="project" value="UniProtKB-KW"/>
</dbReference>
<dbReference type="GO" id="GO:0016984">
    <property type="term" value="F:ribulose-bisphosphate carboxylase activity"/>
    <property type="evidence" value="ECO:0007669"/>
    <property type="project" value="UniProtKB-EC"/>
</dbReference>
<dbReference type="GO" id="GO:0009853">
    <property type="term" value="P:photorespiration"/>
    <property type="evidence" value="ECO:0007669"/>
    <property type="project" value="UniProtKB-KW"/>
</dbReference>
<dbReference type="GO" id="GO:0019253">
    <property type="term" value="P:reductive pentose-phosphate cycle"/>
    <property type="evidence" value="ECO:0007669"/>
    <property type="project" value="UniProtKB-KW"/>
</dbReference>
<dbReference type="Gene3D" id="3.30.70.150">
    <property type="entry name" value="RuBisCO large subunit, N-terminal domain"/>
    <property type="match status" value="1"/>
</dbReference>
<dbReference type="InterPro" id="IPR033966">
    <property type="entry name" value="RuBisCO"/>
</dbReference>
<dbReference type="InterPro" id="IPR017443">
    <property type="entry name" value="RuBisCO_lsu_fd_N"/>
</dbReference>
<dbReference type="InterPro" id="IPR036422">
    <property type="entry name" value="RuBisCO_lsu_N_sf"/>
</dbReference>
<dbReference type="PANTHER" id="PTHR42704">
    <property type="entry name" value="RIBULOSE BISPHOSPHATE CARBOXYLASE"/>
    <property type="match status" value="1"/>
</dbReference>
<dbReference type="PANTHER" id="PTHR42704:SF15">
    <property type="entry name" value="RIBULOSE BISPHOSPHATE CARBOXYLASE LARGE CHAIN"/>
    <property type="match status" value="1"/>
</dbReference>
<dbReference type="Pfam" id="PF02788">
    <property type="entry name" value="RuBisCO_large_N"/>
    <property type="match status" value="1"/>
</dbReference>
<dbReference type="SUPFAM" id="SSF54966">
    <property type="entry name" value="RuBisCO, large subunit, small (N-terminal) domain"/>
    <property type="match status" value="1"/>
</dbReference>
<accession>P31180</accession>
<keyword id="KW-0007">Acetylation</keyword>
<keyword id="KW-0113">Calvin cycle</keyword>
<keyword id="KW-0120">Carbon dioxide fixation</keyword>
<keyword id="KW-0150">Chloroplast</keyword>
<keyword id="KW-0456">Lyase</keyword>
<keyword id="KW-0488">Methylation</keyword>
<keyword id="KW-0503">Monooxygenase</keyword>
<keyword id="KW-0560">Oxidoreductase</keyword>
<keyword id="KW-0601">Photorespiration</keyword>
<keyword id="KW-0602">Photosynthesis</keyword>
<keyword id="KW-0934">Plastid</keyword>
<name>RBL_BUXSE</name>
<feature type="propeptide" id="PRO_0000031149" evidence="1">
    <location>
        <begin position="1"/>
        <end position="2"/>
    </location>
</feature>
<feature type="chain" id="PRO_0000031150" description="Ribulose bisphosphate carboxylase large chain">
    <location>
        <begin position="3"/>
        <end position="57" status="greater than"/>
    </location>
</feature>
<feature type="modified residue" description="N-acetylproline" evidence="1">
    <location>
        <position position="3"/>
    </location>
</feature>
<feature type="modified residue" description="N6,N6,N6-trimethyllysine" evidence="1">
    <location>
        <position position="14"/>
    </location>
</feature>
<feature type="non-terminal residue">
    <location>
        <position position="57"/>
    </location>
</feature>
<protein>
    <recommendedName>
        <fullName>Ribulose bisphosphate carboxylase large chain</fullName>
        <shortName>RuBisCO large subunit</shortName>
        <ecNumber>4.1.1.39</ecNumber>
    </recommendedName>
</protein>
<proteinExistence type="inferred from homology"/>
<evidence type="ECO:0000250" key="1"/>
<evidence type="ECO:0000305" key="2"/>
<gene>
    <name type="primary">rbcL</name>
</gene>
<reference key="1">
    <citation type="journal article" date="1994" name="Mol. Phylogenet. Evol.">
        <title>Molecular phylogeny of families related to Celastrales based on rbcL 5' flanking sequences.</title>
        <authorList>
            <person name="Savolainen V."/>
            <person name="Manen J.F."/>
            <person name="Douzery E.J.P."/>
            <person name="Spichiger R."/>
        </authorList>
    </citation>
    <scope>NUCLEOTIDE SEQUENCE [GENOMIC DNA]</scope>
    <source>
        <strain>BSE1</strain>
    </source>
</reference>
<comment type="function">
    <text evidence="1">RuBisCO catalyzes two reactions: the carboxylation of D-ribulose 1,5-bisphosphate, the primary event in carbon dioxide fixation, as well as the oxidative fragmentation of the pentose substrate in the photorespiration process. Both reactions occur simultaneously and in competition at the same active site (By similarity).</text>
</comment>
<comment type="catalytic activity">
    <reaction>
        <text>2 (2R)-3-phosphoglycerate + 2 H(+) = D-ribulose 1,5-bisphosphate + CO2 + H2O</text>
        <dbReference type="Rhea" id="RHEA:23124"/>
        <dbReference type="ChEBI" id="CHEBI:15377"/>
        <dbReference type="ChEBI" id="CHEBI:15378"/>
        <dbReference type="ChEBI" id="CHEBI:16526"/>
        <dbReference type="ChEBI" id="CHEBI:57870"/>
        <dbReference type="ChEBI" id="CHEBI:58272"/>
        <dbReference type="EC" id="4.1.1.39"/>
    </reaction>
</comment>
<comment type="catalytic activity">
    <reaction>
        <text>D-ribulose 1,5-bisphosphate + O2 = 2-phosphoglycolate + (2R)-3-phosphoglycerate + 2 H(+)</text>
        <dbReference type="Rhea" id="RHEA:36631"/>
        <dbReference type="ChEBI" id="CHEBI:15378"/>
        <dbReference type="ChEBI" id="CHEBI:15379"/>
        <dbReference type="ChEBI" id="CHEBI:57870"/>
        <dbReference type="ChEBI" id="CHEBI:58033"/>
        <dbReference type="ChEBI" id="CHEBI:58272"/>
    </reaction>
</comment>
<comment type="subunit">
    <text evidence="1">Heterohexadecamer of 8 large chains and 8 small chains.</text>
</comment>
<comment type="subcellular location">
    <subcellularLocation>
        <location>Plastid</location>
        <location>Chloroplast</location>
    </subcellularLocation>
</comment>
<comment type="miscellaneous">
    <text evidence="1">The basic functional RuBisCO is composed of a large chain homodimer in a 'head-to-tail' conformation. In form I RuBisCO this homodimer is arranged in a barrel-like tetramer with the small subunits forming a tetrameric 'cap' on each end of the 'barrel' (By similarity).</text>
</comment>
<comment type="similarity">
    <text evidence="2">Belongs to the RuBisCO large chain family. Type I subfamily.</text>
</comment>